<reference key="1">
    <citation type="journal article" date="2004" name="Science">
        <title>The Ashbya gossypii genome as a tool for mapping the ancient Saccharomyces cerevisiae genome.</title>
        <authorList>
            <person name="Dietrich F.S."/>
            <person name="Voegeli S."/>
            <person name="Brachat S."/>
            <person name="Lerch A."/>
            <person name="Gates K."/>
            <person name="Steiner S."/>
            <person name="Mohr C."/>
            <person name="Poehlmann R."/>
            <person name="Luedi P."/>
            <person name="Choi S."/>
            <person name="Wing R.A."/>
            <person name="Flavier A."/>
            <person name="Gaffney T.D."/>
            <person name="Philippsen P."/>
        </authorList>
    </citation>
    <scope>NUCLEOTIDE SEQUENCE [LARGE SCALE GENOMIC DNA]</scope>
    <source>
        <strain>ATCC 10895 / CBS 109.51 / FGSC 9923 / NRRL Y-1056</strain>
    </source>
</reference>
<reference key="2">
    <citation type="journal article" date="2013" name="G3 (Bethesda)">
        <title>Genomes of Ashbya fungi isolated from insects reveal four mating-type loci, numerous translocations, lack of transposons, and distinct gene duplications.</title>
        <authorList>
            <person name="Dietrich F.S."/>
            <person name="Voegeli S."/>
            <person name="Kuo S."/>
            <person name="Philippsen P."/>
        </authorList>
    </citation>
    <scope>GENOME REANNOTATION</scope>
    <source>
        <strain>ATCC 10895 / CBS 109.51 / FGSC 9923 / NRRL Y-1056</strain>
    </source>
</reference>
<organism>
    <name type="scientific">Eremothecium gossypii (strain ATCC 10895 / CBS 109.51 / FGSC 9923 / NRRL Y-1056)</name>
    <name type="common">Yeast</name>
    <name type="synonym">Ashbya gossypii</name>
    <dbReference type="NCBI Taxonomy" id="284811"/>
    <lineage>
        <taxon>Eukaryota</taxon>
        <taxon>Fungi</taxon>
        <taxon>Dikarya</taxon>
        <taxon>Ascomycota</taxon>
        <taxon>Saccharomycotina</taxon>
        <taxon>Saccharomycetes</taxon>
        <taxon>Saccharomycetales</taxon>
        <taxon>Saccharomycetaceae</taxon>
        <taxon>Eremothecium</taxon>
    </lineage>
</organism>
<gene>
    <name type="primary">RPN11</name>
    <name type="ordered locus">AGR006W</name>
</gene>
<name>RPN11_EREGS</name>
<accession>Q750E9</accession>
<feature type="chain" id="PRO_0000213957" description="26S proteasome regulatory subunit RPN11">
    <location>
        <begin position="1"/>
        <end position="311"/>
    </location>
</feature>
<feature type="domain" description="MPN" evidence="2">
    <location>
        <begin position="32"/>
        <end position="167"/>
    </location>
</feature>
<feature type="short sequence motif" description="JAMM motif" evidence="2">
    <location>
        <begin position="114"/>
        <end position="127"/>
    </location>
</feature>
<feature type="binding site" evidence="2">
    <location>
        <position position="114"/>
    </location>
    <ligand>
        <name>Zn(2+)</name>
        <dbReference type="ChEBI" id="CHEBI:29105"/>
        <note>catalytic</note>
    </ligand>
</feature>
<feature type="binding site" evidence="2">
    <location>
        <position position="116"/>
    </location>
    <ligand>
        <name>Zn(2+)</name>
        <dbReference type="ChEBI" id="CHEBI:29105"/>
        <note>catalytic</note>
    </ligand>
</feature>
<feature type="binding site" evidence="2">
    <location>
        <position position="127"/>
    </location>
    <ligand>
        <name>Zn(2+)</name>
        <dbReference type="ChEBI" id="CHEBI:29105"/>
        <note>catalytic</note>
    </ligand>
</feature>
<evidence type="ECO:0000250" key="1"/>
<evidence type="ECO:0000255" key="2">
    <source>
        <dbReference type="PROSITE-ProRule" id="PRU01182"/>
    </source>
</evidence>
<evidence type="ECO:0000305" key="3"/>
<sequence length="311" mass="35202">MDRLQRLMMSQRSNMIGAAATEMPLDDTKETVYISSLALLKMLKHSRAGVPMEVMGLMLGDFVDEYTVNVVDVFAMPQSGTGVSVEAVDDVFQAKMMDMLKQTGRDQMVVGWYHSHPGFGCWLSSVDVDTQRSFEQLNSRAVAVVVDPIQSVKGKVVIDAFRLISPATVVRNQEPRQTTSNVGLLNKPNIQSLIHGLNRHYYSLNIDYHKTSAELNMLMNLHKEQWQSGLKMHDYKEKERINLEATKKSVRIAEQYTKRIEEEKELTEDELKTRYVGKQDPKKHLSETAERVLEENIVSVLTAGVNSVAIK</sequence>
<keyword id="KW-0378">Hydrolase</keyword>
<keyword id="KW-0479">Metal-binding</keyword>
<keyword id="KW-0482">Metalloprotease</keyword>
<keyword id="KW-0645">Protease</keyword>
<keyword id="KW-0647">Proteasome</keyword>
<keyword id="KW-1185">Reference proteome</keyword>
<keyword id="KW-0862">Zinc</keyword>
<proteinExistence type="inferred from homology"/>
<comment type="function">
    <text evidence="1">Acts as a regulatory subunit of the 26 proteasome which is involved in the ATP-dependent degradation of ubiquitinated proteins.</text>
</comment>
<comment type="similarity">
    <text evidence="3">Belongs to the peptidase M67A family.</text>
</comment>
<dbReference type="EMBL" id="AE016820">
    <property type="protein sequence ID" value="AAS54495.1"/>
    <property type="molecule type" value="Genomic_DNA"/>
</dbReference>
<dbReference type="RefSeq" id="NP_986671.1">
    <property type="nucleotide sequence ID" value="NM_211733.1"/>
</dbReference>
<dbReference type="SMR" id="Q750E9"/>
<dbReference type="FunCoup" id="Q750E9">
    <property type="interactions" value="1387"/>
</dbReference>
<dbReference type="STRING" id="284811.Q750E9"/>
<dbReference type="MEROPS" id="M67.001"/>
<dbReference type="EnsemblFungi" id="AAS54495">
    <property type="protein sequence ID" value="AAS54495"/>
    <property type="gene ID" value="AGOS_AGR006W"/>
</dbReference>
<dbReference type="GeneID" id="4622970"/>
<dbReference type="KEGG" id="ago:AGOS_AGR006W"/>
<dbReference type="eggNOG" id="KOG1555">
    <property type="taxonomic scope" value="Eukaryota"/>
</dbReference>
<dbReference type="HOGENOM" id="CLU_052991_0_1_1"/>
<dbReference type="InParanoid" id="Q750E9"/>
<dbReference type="OMA" id="KTGRHEM"/>
<dbReference type="OrthoDB" id="605656at2759"/>
<dbReference type="Proteomes" id="UP000000591">
    <property type="component" value="Chromosome VII"/>
</dbReference>
<dbReference type="GO" id="GO:0005829">
    <property type="term" value="C:cytosol"/>
    <property type="evidence" value="ECO:0007669"/>
    <property type="project" value="EnsemblFungi"/>
</dbReference>
<dbReference type="GO" id="GO:0005739">
    <property type="term" value="C:mitochondrion"/>
    <property type="evidence" value="ECO:0007669"/>
    <property type="project" value="EnsemblFungi"/>
</dbReference>
<dbReference type="GO" id="GO:0034399">
    <property type="term" value="C:nuclear periphery"/>
    <property type="evidence" value="ECO:0007669"/>
    <property type="project" value="EnsemblFungi"/>
</dbReference>
<dbReference type="GO" id="GO:0005634">
    <property type="term" value="C:nucleus"/>
    <property type="evidence" value="ECO:0000318"/>
    <property type="project" value="GO_Central"/>
</dbReference>
<dbReference type="GO" id="GO:0008541">
    <property type="term" value="C:proteasome regulatory particle, lid subcomplex"/>
    <property type="evidence" value="ECO:0000318"/>
    <property type="project" value="GO_Central"/>
</dbReference>
<dbReference type="GO" id="GO:0034515">
    <property type="term" value="C:proteasome storage granule"/>
    <property type="evidence" value="ECO:0007669"/>
    <property type="project" value="EnsemblFungi"/>
</dbReference>
<dbReference type="GO" id="GO:0046872">
    <property type="term" value="F:metal ion binding"/>
    <property type="evidence" value="ECO:0007669"/>
    <property type="project" value="UniProtKB-KW"/>
</dbReference>
<dbReference type="GO" id="GO:0140492">
    <property type="term" value="F:metal-dependent deubiquitinase activity"/>
    <property type="evidence" value="ECO:0000318"/>
    <property type="project" value="GO_Central"/>
</dbReference>
<dbReference type="GO" id="GO:0070628">
    <property type="term" value="F:proteasome binding"/>
    <property type="evidence" value="ECO:0000318"/>
    <property type="project" value="GO_Central"/>
</dbReference>
<dbReference type="GO" id="GO:0000266">
    <property type="term" value="P:mitochondrial fission"/>
    <property type="evidence" value="ECO:0007669"/>
    <property type="project" value="EnsemblFungi"/>
</dbReference>
<dbReference type="GO" id="GO:0016559">
    <property type="term" value="P:peroxisome fission"/>
    <property type="evidence" value="ECO:0007669"/>
    <property type="project" value="EnsemblFungi"/>
</dbReference>
<dbReference type="GO" id="GO:0043248">
    <property type="term" value="P:proteasome assembly"/>
    <property type="evidence" value="ECO:0007669"/>
    <property type="project" value="EnsemblFungi"/>
</dbReference>
<dbReference type="GO" id="GO:1902906">
    <property type="term" value="P:proteasome storage granule assembly"/>
    <property type="evidence" value="ECO:0007669"/>
    <property type="project" value="EnsemblFungi"/>
</dbReference>
<dbReference type="GO" id="GO:0043161">
    <property type="term" value="P:proteasome-mediated ubiquitin-dependent protein catabolic process"/>
    <property type="evidence" value="ECO:0000318"/>
    <property type="project" value="GO_Central"/>
</dbReference>
<dbReference type="GO" id="GO:0016579">
    <property type="term" value="P:protein deubiquitination"/>
    <property type="evidence" value="ECO:0007669"/>
    <property type="project" value="EnsemblFungi"/>
</dbReference>
<dbReference type="CDD" id="cd08069">
    <property type="entry name" value="MPN_RPN11_CSN5"/>
    <property type="match status" value="1"/>
</dbReference>
<dbReference type="FunFam" id="3.40.140.10:FF:000001">
    <property type="entry name" value="26S proteasome non-ATPase regulatory subunit"/>
    <property type="match status" value="1"/>
</dbReference>
<dbReference type="Gene3D" id="3.40.140.10">
    <property type="entry name" value="Cytidine Deaminase, domain 2"/>
    <property type="match status" value="1"/>
</dbReference>
<dbReference type="InterPro" id="IPR000555">
    <property type="entry name" value="JAMM/MPN+_dom"/>
</dbReference>
<dbReference type="InterPro" id="IPR050242">
    <property type="entry name" value="JAMM_MPN+_peptidase_M67A"/>
</dbReference>
<dbReference type="InterPro" id="IPR037518">
    <property type="entry name" value="MPN"/>
</dbReference>
<dbReference type="InterPro" id="IPR056263">
    <property type="entry name" value="RPN11_C"/>
</dbReference>
<dbReference type="PANTHER" id="PTHR10410">
    <property type="entry name" value="EUKARYOTIC TRANSLATION INITIATION FACTOR 3 -RELATED"/>
    <property type="match status" value="1"/>
</dbReference>
<dbReference type="Pfam" id="PF01398">
    <property type="entry name" value="JAB"/>
    <property type="match status" value="1"/>
</dbReference>
<dbReference type="Pfam" id="PF23594">
    <property type="entry name" value="RPN11_C"/>
    <property type="match status" value="1"/>
</dbReference>
<dbReference type="SMART" id="SM00232">
    <property type="entry name" value="JAB_MPN"/>
    <property type="match status" value="1"/>
</dbReference>
<dbReference type="SUPFAM" id="SSF102712">
    <property type="entry name" value="JAB1/MPN domain"/>
    <property type="match status" value="1"/>
</dbReference>
<dbReference type="PROSITE" id="PS50249">
    <property type="entry name" value="MPN"/>
    <property type="match status" value="1"/>
</dbReference>
<protein>
    <recommendedName>
        <fullName>26S proteasome regulatory subunit RPN11</fullName>
    </recommendedName>
</protein>